<proteinExistence type="inferred from homology"/>
<organism>
    <name type="scientific">Mycolicibacterium paratuberculosis (strain ATCC BAA-968 / K-10)</name>
    <name type="common">Mycobacterium paratuberculosis</name>
    <dbReference type="NCBI Taxonomy" id="262316"/>
    <lineage>
        <taxon>Bacteria</taxon>
        <taxon>Bacillati</taxon>
        <taxon>Actinomycetota</taxon>
        <taxon>Actinomycetes</taxon>
        <taxon>Mycobacteriales</taxon>
        <taxon>Mycobacteriaceae</taxon>
        <taxon>Mycobacterium</taxon>
        <taxon>Mycobacterium avium complex (MAC)</taxon>
    </lineage>
</organism>
<name>PSA_MYCPA</name>
<reference key="1">
    <citation type="journal article" date="2005" name="Proc. Natl. Acad. Sci. U.S.A.">
        <title>The complete genome sequence of Mycobacterium avium subspecies paratuberculosis.</title>
        <authorList>
            <person name="Li L."/>
            <person name="Bannantine J.P."/>
            <person name="Zhang Q."/>
            <person name="Amonsin A."/>
            <person name="May B.J."/>
            <person name="Alt D."/>
            <person name="Banerji N."/>
            <person name="Kanjilal S."/>
            <person name="Kapur V."/>
        </authorList>
    </citation>
    <scope>NUCLEOTIDE SEQUENCE [LARGE SCALE GENOMIC DNA]</scope>
    <source>
        <strain>ATCC BAA-968 / K-10</strain>
    </source>
</reference>
<comment type="function">
    <text evidence="1">Component of the proteasome core, a large protease complex with broad specificity involved in protein degradation.</text>
</comment>
<comment type="activity regulation">
    <text evidence="1">The formation of the proteasomal ATPase ARC-20S proteasome complex, likely via the docking of the C-termini of ARC into the intersubunit pockets in the alpha-rings, may trigger opening of the gate for substrate entry. Interconversion between the open-gate and close-gate conformations leads to a dynamic regulation of the 20S proteasome proteolysis activity.</text>
</comment>
<comment type="pathway">
    <text evidence="1">Protein degradation; proteasomal Pup-dependent pathway.</text>
</comment>
<comment type="subunit">
    <text evidence="1">The 20S proteasome core is composed of 14 alpha and 14 beta subunits that assemble into four stacked heptameric rings, resulting in a barrel-shaped structure. The two inner rings, each composed of seven catalytic beta subunits, are sandwiched by two outer rings, each composed of seven alpha subunits. The catalytic chamber with the active sites is on the inside of the barrel. Has a gated structure, the ends of the cylinder being occluded by the N-termini of the alpha-subunits. Is capped by the proteasome-associated ATPase, ARC.</text>
</comment>
<comment type="subcellular location">
    <subcellularLocation>
        <location evidence="1">Cytoplasm</location>
    </subcellularLocation>
</comment>
<comment type="similarity">
    <text evidence="1">Belongs to the peptidase T1A family.</text>
</comment>
<sequence length="256" mass="28078">MSFPYFISPEQAMRERSELARKGIARGKSVVALVYAGGVLFVAENPSRSLQKISELYDRVGFAAAGKFNEFDNLRRGGIQFADTRGYAYDRRDVTGRQLANVYAQTLGTIFTEQAKPYEVELCVAEVAHYGETKPPELYRITYDGSIADEPHFVVMGGTTEPITTALKDSYAENANLREATRIAVRALRAGSESSNGDQSALDVGSLEVAILDVNRPRRAFRRINRPTLENLLRELDSNGSDGNGDAPELNGGSSD</sequence>
<keyword id="KW-0963">Cytoplasm</keyword>
<keyword id="KW-0647">Proteasome</keyword>
<keyword id="KW-1185">Reference proteome</keyword>
<dbReference type="EMBL" id="AE016958">
    <property type="protein sequence ID" value="AAS04151.1"/>
    <property type="molecule type" value="Genomic_DNA"/>
</dbReference>
<dbReference type="RefSeq" id="WP_003878079.1">
    <property type="nucleotide sequence ID" value="NZ_CP106873.1"/>
</dbReference>
<dbReference type="SMR" id="Q73YW9"/>
<dbReference type="STRING" id="262316.MAP_1834c"/>
<dbReference type="MEROPS" id="T01.980"/>
<dbReference type="KEGG" id="mpa:MAP_1834c"/>
<dbReference type="eggNOG" id="COG0638">
    <property type="taxonomic scope" value="Bacteria"/>
</dbReference>
<dbReference type="HOGENOM" id="CLU_071031_0_0_11"/>
<dbReference type="UniPathway" id="UPA00997"/>
<dbReference type="Proteomes" id="UP000000580">
    <property type="component" value="Chromosome"/>
</dbReference>
<dbReference type="GO" id="GO:0005737">
    <property type="term" value="C:cytoplasm"/>
    <property type="evidence" value="ECO:0007669"/>
    <property type="project" value="UniProtKB-SubCell"/>
</dbReference>
<dbReference type="GO" id="GO:0019773">
    <property type="term" value="C:proteasome core complex, alpha-subunit complex"/>
    <property type="evidence" value="ECO:0007669"/>
    <property type="project" value="UniProtKB-UniRule"/>
</dbReference>
<dbReference type="GO" id="GO:0004298">
    <property type="term" value="F:threonine-type endopeptidase activity"/>
    <property type="evidence" value="ECO:0007669"/>
    <property type="project" value="InterPro"/>
</dbReference>
<dbReference type="GO" id="GO:0019941">
    <property type="term" value="P:modification-dependent protein catabolic process"/>
    <property type="evidence" value="ECO:0007669"/>
    <property type="project" value="UniProtKB-UniRule"/>
</dbReference>
<dbReference type="GO" id="GO:0010498">
    <property type="term" value="P:proteasomal protein catabolic process"/>
    <property type="evidence" value="ECO:0007669"/>
    <property type="project" value="UniProtKB-UniRule"/>
</dbReference>
<dbReference type="CDD" id="cd01906">
    <property type="entry name" value="proteasome_protease_HslV"/>
    <property type="match status" value="1"/>
</dbReference>
<dbReference type="FunFam" id="3.60.20.10:FF:000023">
    <property type="entry name" value="Proteasome subunit alpha"/>
    <property type="match status" value="1"/>
</dbReference>
<dbReference type="Gene3D" id="3.60.20.10">
    <property type="entry name" value="Glutamine Phosphoribosylpyrophosphate, subunit 1, domain 1"/>
    <property type="match status" value="1"/>
</dbReference>
<dbReference type="HAMAP" id="MF_00289_B">
    <property type="entry name" value="Proteasome_A_B"/>
    <property type="match status" value="1"/>
</dbReference>
<dbReference type="InterPro" id="IPR029055">
    <property type="entry name" value="Ntn_hydrolases_N"/>
</dbReference>
<dbReference type="InterPro" id="IPR050115">
    <property type="entry name" value="Proteasome_alpha"/>
</dbReference>
<dbReference type="InterPro" id="IPR023332">
    <property type="entry name" value="Proteasome_alpha-type"/>
</dbReference>
<dbReference type="InterPro" id="IPR022296">
    <property type="entry name" value="Proteasome_asu_bac"/>
</dbReference>
<dbReference type="InterPro" id="IPR001353">
    <property type="entry name" value="Proteasome_sua/b"/>
</dbReference>
<dbReference type="NCBIfam" id="TIGR03691">
    <property type="entry name" value="20S_bact_alpha"/>
    <property type="match status" value="1"/>
</dbReference>
<dbReference type="PANTHER" id="PTHR11599">
    <property type="entry name" value="PROTEASOME SUBUNIT ALPHA/BETA"/>
    <property type="match status" value="1"/>
</dbReference>
<dbReference type="Pfam" id="PF00227">
    <property type="entry name" value="Proteasome"/>
    <property type="match status" value="1"/>
</dbReference>
<dbReference type="SUPFAM" id="SSF56235">
    <property type="entry name" value="N-terminal nucleophile aminohydrolases (Ntn hydrolases)"/>
    <property type="match status" value="1"/>
</dbReference>
<dbReference type="PROSITE" id="PS51475">
    <property type="entry name" value="PROTEASOME_ALPHA_2"/>
    <property type="match status" value="1"/>
</dbReference>
<feature type="chain" id="PRO_0000397154" description="Proteasome subunit alpha">
    <location>
        <begin position="1"/>
        <end position="256"/>
    </location>
</feature>
<feature type="region of interest" description="Disordered" evidence="2">
    <location>
        <begin position="235"/>
        <end position="256"/>
    </location>
</feature>
<accession>Q73YW9</accession>
<evidence type="ECO:0000255" key="1">
    <source>
        <dbReference type="HAMAP-Rule" id="MF_00289"/>
    </source>
</evidence>
<evidence type="ECO:0000256" key="2">
    <source>
        <dbReference type="SAM" id="MobiDB-lite"/>
    </source>
</evidence>
<gene>
    <name evidence="1" type="primary">prcA</name>
    <name type="ordered locus">MAP_1834c</name>
</gene>
<protein>
    <recommendedName>
        <fullName evidence="1">Proteasome subunit alpha</fullName>
    </recommendedName>
    <alternativeName>
        <fullName evidence="1">20S proteasome alpha subunit</fullName>
    </alternativeName>
    <alternativeName>
        <fullName evidence="1">Proteasome core protein PrcA</fullName>
    </alternativeName>
</protein>